<reference key="1">
    <citation type="submission" date="2007-10" db="EMBL/GenBank/DDBJ databases">
        <title>Complete sequence of Shewanella pealeana ATCC 700345.</title>
        <authorList>
            <consortium name="US DOE Joint Genome Institute"/>
            <person name="Copeland A."/>
            <person name="Lucas S."/>
            <person name="Lapidus A."/>
            <person name="Barry K."/>
            <person name="Glavina del Rio T."/>
            <person name="Dalin E."/>
            <person name="Tice H."/>
            <person name="Pitluck S."/>
            <person name="Chertkov O."/>
            <person name="Brettin T."/>
            <person name="Bruce D."/>
            <person name="Detter J.C."/>
            <person name="Han C."/>
            <person name="Schmutz J."/>
            <person name="Larimer F."/>
            <person name="Land M."/>
            <person name="Hauser L."/>
            <person name="Kyrpides N."/>
            <person name="Kim E."/>
            <person name="Zhao J.-S.Z."/>
            <person name="Manno D."/>
            <person name="Hawari J."/>
            <person name="Richardson P."/>
        </authorList>
    </citation>
    <scope>NUCLEOTIDE SEQUENCE [LARGE SCALE GENOMIC DNA]</scope>
    <source>
        <strain>ATCC 700345 / ANG-SQ1</strain>
    </source>
</reference>
<gene>
    <name evidence="1" type="primary">hslV</name>
    <name type="ordered locus">Spea_3781</name>
</gene>
<sequence length="174" mass="18784">MTTIVSVRRNNQVVIAGDGQVSLGNTVMKGNAKKVRRLYHNKVLAGFAGSTADAFTLFERFEAKLEMHQGHLMRAAVEMAKDWRSDKVLRKLEALLAVADAESSLIITGNGDVVQPENDLIAIGSGGAFAQSAATALLENTDLSALEIAEKSLTIAGNICVFTNQFKTIEELKY</sequence>
<accession>A8H955</accession>
<organism>
    <name type="scientific">Shewanella pealeana (strain ATCC 700345 / ANG-SQ1)</name>
    <dbReference type="NCBI Taxonomy" id="398579"/>
    <lineage>
        <taxon>Bacteria</taxon>
        <taxon>Pseudomonadati</taxon>
        <taxon>Pseudomonadota</taxon>
        <taxon>Gammaproteobacteria</taxon>
        <taxon>Alteromonadales</taxon>
        <taxon>Shewanellaceae</taxon>
        <taxon>Shewanella</taxon>
    </lineage>
</organism>
<name>HSLV_SHEPA</name>
<keyword id="KW-0021">Allosteric enzyme</keyword>
<keyword id="KW-0963">Cytoplasm</keyword>
<keyword id="KW-0378">Hydrolase</keyword>
<keyword id="KW-0479">Metal-binding</keyword>
<keyword id="KW-0645">Protease</keyword>
<keyword id="KW-1185">Reference proteome</keyword>
<keyword id="KW-0915">Sodium</keyword>
<keyword id="KW-0888">Threonine protease</keyword>
<proteinExistence type="inferred from homology"/>
<evidence type="ECO:0000255" key="1">
    <source>
        <dbReference type="HAMAP-Rule" id="MF_00248"/>
    </source>
</evidence>
<dbReference type="EC" id="3.4.25.2" evidence="1"/>
<dbReference type="EMBL" id="CP000851">
    <property type="protein sequence ID" value="ABV89092.1"/>
    <property type="molecule type" value="Genomic_DNA"/>
</dbReference>
<dbReference type="RefSeq" id="WP_012156974.1">
    <property type="nucleotide sequence ID" value="NC_009901.1"/>
</dbReference>
<dbReference type="SMR" id="A8H955"/>
<dbReference type="STRING" id="398579.Spea_3781"/>
<dbReference type="MEROPS" id="T01.007"/>
<dbReference type="KEGG" id="spl:Spea_3781"/>
<dbReference type="eggNOG" id="COG5405">
    <property type="taxonomic scope" value="Bacteria"/>
</dbReference>
<dbReference type="HOGENOM" id="CLU_093872_1_0_6"/>
<dbReference type="OrthoDB" id="9804884at2"/>
<dbReference type="Proteomes" id="UP000002608">
    <property type="component" value="Chromosome"/>
</dbReference>
<dbReference type="GO" id="GO:0009376">
    <property type="term" value="C:HslUV protease complex"/>
    <property type="evidence" value="ECO:0007669"/>
    <property type="project" value="UniProtKB-UniRule"/>
</dbReference>
<dbReference type="GO" id="GO:0005839">
    <property type="term" value="C:proteasome core complex"/>
    <property type="evidence" value="ECO:0007669"/>
    <property type="project" value="InterPro"/>
</dbReference>
<dbReference type="GO" id="GO:0046872">
    <property type="term" value="F:metal ion binding"/>
    <property type="evidence" value="ECO:0007669"/>
    <property type="project" value="UniProtKB-KW"/>
</dbReference>
<dbReference type="GO" id="GO:0004298">
    <property type="term" value="F:threonine-type endopeptidase activity"/>
    <property type="evidence" value="ECO:0007669"/>
    <property type="project" value="UniProtKB-KW"/>
</dbReference>
<dbReference type="GO" id="GO:0051603">
    <property type="term" value="P:proteolysis involved in protein catabolic process"/>
    <property type="evidence" value="ECO:0007669"/>
    <property type="project" value="InterPro"/>
</dbReference>
<dbReference type="CDD" id="cd01913">
    <property type="entry name" value="protease_HslV"/>
    <property type="match status" value="1"/>
</dbReference>
<dbReference type="FunFam" id="3.60.20.10:FF:000002">
    <property type="entry name" value="ATP-dependent protease subunit HslV"/>
    <property type="match status" value="1"/>
</dbReference>
<dbReference type="Gene3D" id="3.60.20.10">
    <property type="entry name" value="Glutamine Phosphoribosylpyrophosphate, subunit 1, domain 1"/>
    <property type="match status" value="1"/>
</dbReference>
<dbReference type="HAMAP" id="MF_00248">
    <property type="entry name" value="HslV"/>
    <property type="match status" value="1"/>
</dbReference>
<dbReference type="InterPro" id="IPR022281">
    <property type="entry name" value="ATP-dep_Prtase_HsIV_su"/>
</dbReference>
<dbReference type="InterPro" id="IPR029055">
    <property type="entry name" value="Ntn_hydrolases_N"/>
</dbReference>
<dbReference type="InterPro" id="IPR001353">
    <property type="entry name" value="Proteasome_sua/b"/>
</dbReference>
<dbReference type="InterPro" id="IPR023333">
    <property type="entry name" value="Proteasome_suB-type"/>
</dbReference>
<dbReference type="NCBIfam" id="TIGR03692">
    <property type="entry name" value="ATP_dep_HslV"/>
    <property type="match status" value="1"/>
</dbReference>
<dbReference type="NCBIfam" id="NF003964">
    <property type="entry name" value="PRK05456.1"/>
    <property type="match status" value="1"/>
</dbReference>
<dbReference type="PANTHER" id="PTHR32194:SF0">
    <property type="entry name" value="ATP-DEPENDENT PROTEASE SUBUNIT HSLV"/>
    <property type="match status" value="1"/>
</dbReference>
<dbReference type="PANTHER" id="PTHR32194">
    <property type="entry name" value="METALLOPROTEASE TLDD"/>
    <property type="match status" value="1"/>
</dbReference>
<dbReference type="Pfam" id="PF00227">
    <property type="entry name" value="Proteasome"/>
    <property type="match status" value="1"/>
</dbReference>
<dbReference type="PIRSF" id="PIRSF039093">
    <property type="entry name" value="HslV"/>
    <property type="match status" value="1"/>
</dbReference>
<dbReference type="SUPFAM" id="SSF56235">
    <property type="entry name" value="N-terminal nucleophile aminohydrolases (Ntn hydrolases)"/>
    <property type="match status" value="1"/>
</dbReference>
<dbReference type="PROSITE" id="PS51476">
    <property type="entry name" value="PROTEASOME_BETA_2"/>
    <property type="match status" value="1"/>
</dbReference>
<comment type="function">
    <text evidence="1">Protease subunit of a proteasome-like degradation complex believed to be a general protein degrading machinery.</text>
</comment>
<comment type="catalytic activity">
    <reaction evidence="1">
        <text>ATP-dependent cleavage of peptide bonds with broad specificity.</text>
        <dbReference type="EC" id="3.4.25.2"/>
    </reaction>
</comment>
<comment type="activity regulation">
    <text evidence="1">Allosterically activated by HslU binding.</text>
</comment>
<comment type="subunit">
    <text evidence="1">A double ring-shaped homohexamer of HslV is capped on each side by a ring-shaped HslU homohexamer. The assembly of the HslU/HslV complex is dependent on binding of ATP.</text>
</comment>
<comment type="subcellular location">
    <subcellularLocation>
        <location evidence="1">Cytoplasm</location>
    </subcellularLocation>
</comment>
<comment type="similarity">
    <text evidence="1">Belongs to the peptidase T1B family. HslV subfamily.</text>
</comment>
<feature type="chain" id="PRO_1000078430" description="ATP-dependent protease subunit HslV">
    <location>
        <begin position="1"/>
        <end position="174"/>
    </location>
</feature>
<feature type="active site" evidence="1">
    <location>
        <position position="2"/>
    </location>
</feature>
<feature type="binding site" evidence="1">
    <location>
        <position position="157"/>
    </location>
    <ligand>
        <name>Na(+)</name>
        <dbReference type="ChEBI" id="CHEBI:29101"/>
    </ligand>
</feature>
<feature type="binding site" evidence="1">
    <location>
        <position position="160"/>
    </location>
    <ligand>
        <name>Na(+)</name>
        <dbReference type="ChEBI" id="CHEBI:29101"/>
    </ligand>
</feature>
<feature type="binding site" evidence="1">
    <location>
        <position position="163"/>
    </location>
    <ligand>
        <name>Na(+)</name>
        <dbReference type="ChEBI" id="CHEBI:29101"/>
    </ligand>
</feature>
<protein>
    <recommendedName>
        <fullName evidence="1">ATP-dependent protease subunit HslV</fullName>
        <ecNumber evidence="1">3.4.25.2</ecNumber>
    </recommendedName>
</protein>